<dbReference type="EMBL" id="CP000826">
    <property type="protein sequence ID" value="ABV39160.1"/>
    <property type="molecule type" value="Genomic_DNA"/>
</dbReference>
<dbReference type="SMR" id="A8G7S0"/>
<dbReference type="KEGG" id="spe:Spro_0050"/>
<dbReference type="eggNOG" id="COG2985">
    <property type="taxonomic scope" value="Bacteria"/>
</dbReference>
<dbReference type="HOGENOM" id="CLU_035023_3_1_6"/>
<dbReference type="OrthoDB" id="5166626at2"/>
<dbReference type="GO" id="GO:0005886">
    <property type="term" value="C:plasma membrane"/>
    <property type="evidence" value="ECO:0007669"/>
    <property type="project" value="UniProtKB-SubCell"/>
</dbReference>
<dbReference type="GO" id="GO:0008324">
    <property type="term" value="F:monoatomic cation transmembrane transporter activity"/>
    <property type="evidence" value="ECO:0007669"/>
    <property type="project" value="InterPro"/>
</dbReference>
<dbReference type="GO" id="GO:0006813">
    <property type="term" value="P:potassium ion transport"/>
    <property type="evidence" value="ECO:0007669"/>
    <property type="project" value="InterPro"/>
</dbReference>
<dbReference type="Gene3D" id="3.30.70.1450">
    <property type="entry name" value="Regulator of K+ conductance, C-terminal domain"/>
    <property type="match status" value="2"/>
</dbReference>
<dbReference type="HAMAP" id="MF_01016">
    <property type="entry name" value="YidE"/>
    <property type="match status" value="1"/>
</dbReference>
<dbReference type="InterPro" id="IPR050144">
    <property type="entry name" value="AAE_transporter"/>
</dbReference>
<dbReference type="InterPro" id="IPR006037">
    <property type="entry name" value="RCK_C"/>
</dbReference>
<dbReference type="InterPro" id="IPR036721">
    <property type="entry name" value="RCK_C_sf"/>
</dbReference>
<dbReference type="InterPro" id="IPR023018">
    <property type="entry name" value="Transpt_YidE_put"/>
</dbReference>
<dbReference type="InterPro" id="IPR006512">
    <property type="entry name" value="YidE_YbjL"/>
</dbReference>
<dbReference type="NCBIfam" id="NF003007">
    <property type="entry name" value="PRK03818.1"/>
    <property type="match status" value="1"/>
</dbReference>
<dbReference type="NCBIfam" id="TIGR01625">
    <property type="entry name" value="YidE_YbjL_dupl"/>
    <property type="match status" value="2"/>
</dbReference>
<dbReference type="PANTHER" id="PTHR30445">
    <property type="entry name" value="K(+)_H(+) ANTIPORTER SUBUNIT KHTT"/>
    <property type="match status" value="1"/>
</dbReference>
<dbReference type="PANTHER" id="PTHR30445:SF3">
    <property type="entry name" value="TRANSPORT PROTEIN YIDE-RELATED"/>
    <property type="match status" value="1"/>
</dbReference>
<dbReference type="Pfam" id="PF06826">
    <property type="entry name" value="Asp-Al_Ex"/>
    <property type="match status" value="2"/>
</dbReference>
<dbReference type="Pfam" id="PF02080">
    <property type="entry name" value="TrkA_C"/>
    <property type="match status" value="1"/>
</dbReference>
<dbReference type="SUPFAM" id="SSF116726">
    <property type="entry name" value="TrkA C-terminal domain-like"/>
    <property type="match status" value="2"/>
</dbReference>
<dbReference type="PROSITE" id="PS51202">
    <property type="entry name" value="RCK_C"/>
    <property type="match status" value="2"/>
</dbReference>
<sequence>MSEIALTVSMLALVAVLGLWMGNWKIYGVGLGIGGVLFGGIIVGHFAQSWQLNLNGDMLHFIQEFGLILFVYTIGIQVGPGFFSSLRVSGLRLNGFAILLVLVGGLVAAVVHKLFAVPLPIILGVFSGAVTNTPALGAGQQILTDLGSDPALVDRMGMGYAMAYPFGICGILLVMWLIRLFFRINIEQEAQAFASSLGNQRELLHTMNVAVRNPNLQGMAIKNVPLLNGEDIICSRLKRGDLLMVPAPLEKLELGDYLHLVGKRESLENARLVIGEEVDVSLSTRGTELQVVRAVVTNEKVLGSKIRDLNLKQKYDVVISRLNRSGVELVAGSNVTLQFGDILNLVGRPESIEAVAAIVGNAQQKLQQVQMLPVFIGIGLGVLLGSIPLFIPGFPAALRLGLAGGPLVAALILGRIGSIGKLYWFMPPSANLALRELGIVLFLAVVGLKSGGNFVDTLINGEGLAWIGYGALITAIPLFSVGVLARMVGKMNYLTLSGMLAGSMTDPPALAFANGLHPTSGAAALSYATVYPLAMFLRIMSPQLLAVLFWAM</sequence>
<organism>
    <name type="scientific">Serratia proteamaculans (strain 568)</name>
    <dbReference type="NCBI Taxonomy" id="399741"/>
    <lineage>
        <taxon>Bacteria</taxon>
        <taxon>Pseudomonadati</taxon>
        <taxon>Pseudomonadota</taxon>
        <taxon>Gammaproteobacteria</taxon>
        <taxon>Enterobacterales</taxon>
        <taxon>Yersiniaceae</taxon>
        <taxon>Serratia</taxon>
    </lineage>
</organism>
<proteinExistence type="inferred from homology"/>
<comment type="subcellular location">
    <subcellularLocation>
        <location evidence="1">Cell membrane</location>
        <topology evidence="1">Multi-pass membrane protein</topology>
    </subcellularLocation>
</comment>
<comment type="similarity">
    <text evidence="1">Belongs to the AAE transporter (TC 2.A.81) family. YidE subfamily.</text>
</comment>
<name>Y050_SERP5</name>
<evidence type="ECO:0000255" key="1">
    <source>
        <dbReference type="HAMAP-Rule" id="MF_01016"/>
    </source>
</evidence>
<gene>
    <name type="ordered locus">Spro_0050</name>
</gene>
<reference key="1">
    <citation type="submission" date="2007-09" db="EMBL/GenBank/DDBJ databases">
        <title>Complete sequence of chromosome of Serratia proteamaculans 568.</title>
        <authorList>
            <consortium name="US DOE Joint Genome Institute"/>
            <person name="Copeland A."/>
            <person name="Lucas S."/>
            <person name="Lapidus A."/>
            <person name="Barry K."/>
            <person name="Glavina del Rio T."/>
            <person name="Dalin E."/>
            <person name="Tice H."/>
            <person name="Pitluck S."/>
            <person name="Chain P."/>
            <person name="Malfatti S."/>
            <person name="Shin M."/>
            <person name="Vergez L."/>
            <person name="Schmutz J."/>
            <person name="Larimer F."/>
            <person name="Land M."/>
            <person name="Hauser L."/>
            <person name="Kyrpides N."/>
            <person name="Kim E."/>
            <person name="Taghavi S."/>
            <person name="Newman L."/>
            <person name="Vangronsveld J."/>
            <person name="van der Lelie D."/>
            <person name="Richardson P."/>
        </authorList>
    </citation>
    <scope>NUCLEOTIDE SEQUENCE [LARGE SCALE GENOMIC DNA]</scope>
    <source>
        <strain>568</strain>
    </source>
</reference>
<feature type="chain" id="PRO_1000063255" description="Putative transport protein Spro_0050">
    <location>
        <begin position="1"/>
        <end position="552"/>
    </location>
</feature>
<feature type="transmembrane region" description="Helical" evidence="1">
    <location>
        <begin position="4"/>
        <end position="24"/>
    </location>
</feature>
<feature type="transmembrane region" description="Helical" evidence="1">
    <location>
        <begin position="26"/>
        <end position="46"/>
    </location>
</feature>
<feature type="transmembrane region" description="Helical" evidence="1">
    <location>
        <begin position="65"/>
        <end position="85"/>
    </location>
</feature>
<feature type="transmembrane region" description="Helical" evidence="1">
    <location>
        <begin position="96"/>
        <end position="116"/>
    </location>
</feature>
<feature type="transmembrane region" description="Helical" evidence="1">
    <location>
        <begin position="117"/>
        <end position="137"/>
    </location>
</feature>
<feature type="transmembrane region" description="Helical" evidence="1">
    <location>
        <begin position="158"/>
        <end position="178"/>
    </location>
</feature>
<feature type="transmembrane region" description="Helical" evidence="1">
    <location>
        <begin position="371"/>
        <end position="391"/>
    </location>
</feature>
<feature type="transmembrane region" description="Helical" evidence="1">
    <location>
        <begin position="393"/>
        <end position="413"/>
    </location>
</feature>
<feature type="transmembrane region" description="Helical" evidence="1">
    <location>
        <begin position="439"/>
        <end position="459"/>
    </location>
</feature>
<feature type="transmembrane region" description="Helical" evidence="1">
    <location>
        <begin position="464"/>
        <end position="484"/>
    </location>
</feature>
<feature type="transmembrane region" description="Helical" evidence="1">
    <location>
        <begin position="493"/>
        <end position="513"/>
    </location>
</feature>
<feature type="transmembrane region" description="Helical" evidence="1">
    <location>
        <begin position="530"/>
        <end position="550"/>
    </location>
</feature>
<feature type="domain" description="RCK C-terminal 1" evidence="1">
    <location>
        <begin position="192"/>
        <end position="276"/>
    </location>
</feature>
<feature type="domain" description="RCK C-terminal 2" evidence="1">
    <location>
        <begin position="279"/>
        <end position="361"/>
    </location>
</feature>
<accession>A8G7S0</accession>
<protein>
    <recommendedName>
        <fullName evidence="1">Putative transport protein Spro_0050</fullName>
    </recommendedName>
</protein>
<keyword id="KW-1003">Cell membrane</keyword>
<keyword id="KW-0472">Membrane</keyword>
<keyword id="KW-0677">Repeat</keyword>
<keyword id="KW-0812">Transmembrane</keyword>
<keyword id="KW-1133">Transmembrane helix</keyword>
<keyword id="KW-0813">Transport</keyword>